<feature type="chain" id="PRO_0000082920" description="Methionyl-tRNA formyltransferase">
    <location>
        <begin position="1"/>
        <end position="311"/>
    </location>
</feature>
<feature type="binding site" evidence="1">
    <location>
        <begin position="112"/>
        <end position="115"/>
    </location>
    <ligand>
        <name>(6S)-5,6,7,8-tetrahydrofolate</name>
        <dbReference type="ChEBI" id="CHEBI:57453"/>
    </ligand>
</feature>
<comment type="function">
    <text evidence="1">Attaches a formyl group to the free amino group of methionyl-tRNA(fMet). The formyl group appears to play a dual role in the initiator identity of N-formylmethionyl-tRNA by promoting its recognition by IF2 and preventing the misappropriation of this tRNA by the elongation apparatus.</text>
</comment>
<comment type="catalytic activity">
    <reaction evidence="1">
        <text>L-methionyl-tRNA(fMet) + (6R)-10-formyltetrahydrofolate = N-formyl-L-methionyl-tRNA(fMet) + (6S)-5,6,7,8-tetrahydrofolate + H(+)</text>
        <dbReference type="Rhea" id="RHEA:24380"/>
        <dbReference type="Rhea" id="RHEA-COMP:9952"/>
        <dbReference type="Rhea" id="RHEA-COMP:9953"/>
        <dbReference type="ChEBI" id="CHEBI:15378"/>
        <dbReference type="ChEBI" id="CHEBI:57453"/>
        <dbReference type="ChEBI" id="CHEBI:78530"/>
        <dbReference type="ChEBI" id="CHEBI:78844"/>
        <dbReference type="ChEBI" id="CHEBI:195366"/>
        <dbReference type="EC" id="2.1.2.9"/>
    </reaction>
</comment>
<comment type="similarity">
    <text evidence="1">Belongs to the Fmt family.</text>
</comment>
<gene>
    <name evidence="1" type="primary">fmt</name>
    <name type="ordered locus">BH00750</name>
</gene>
<keyword id="KW-0648">Protein biosynthesis</keyword>
<keyword id="KW-0808">Transferase</keyword>
<protein>
    <recommendedName>
        <fullName evidence="1">Methionyl-tRNA formyltransferase</fullName>
        <ecNumber evidence="1">2.1.2.9</ecNumber>
    </recommendedName>
</protein>
<accession>Q6G5F1</accession>
<reference key="1">
    <citation type="journal article" date="2004" name="Proc. Natl. Acad. Sci. U.S.A.">
        <title>The louse-borne human pathogen Bartonella quintana is a genomic derivative of the zoonotic agent Bartonella henselae.</title>
        <authorList>
            <person name="Alsmark U.C.M."/>
            <person name="Frank A.C."/>
            <person name="Karlberg E.O."/>
            <person name="Legault B.-A."/>
            <person name="Ardell D.H."/>
            <person name="Canbaeck B."/>
            <person name="Eriksson A.-S."/>
            <person name="Naeslund A.K."/>
            <person name="Handley S.A."/>
            <person name="Huvet M."/>
            <person name="La Scola B."/>
            <person name="Holmberg M."/>
            <person name="Andersson S.G.E."/>
        </authorList>
    </citation>
    <scope>NUCLEOTIDE SEQUENCE [LARGE SCALE GENOMIC DNA]</scope>
    <source>
        <strain>ATCC 49882 / DSM 28221 / CCUG 30454 / Houston 1</strain>
    </source>
</reference>
<dbReference type="EC" id="2.1.2.9" evidence="1"/>
<dbReference type="EMBL" id="BX897699">
    <property type="protein sequence ID" value="CAF26891.1"/>
    <property type="molecule type" value="Genomic_DNA"/>
</dbReference>
<dbReference type="RefSeq" id="WP_011180036.1">
    <property type="nucleotide sequence ID" value="NZ_LRIJ02000001.1"/>
</dbReference>
<dbReference type="SMR" id="Q6G5F1"/>
<dbReference type="PaxDb" id="283166-BH00750"/>
<dbReference type="EnsemblBacteria" id="CAF26891">
    <property type="protein sequence ID" value="CAF26891"/>
    <property type="gene ID" value="BH00750"/>
</dbReference>
<dbReference type="GeneID" id="92986361"/>
<dbReference type="KEGG" id="bhe:BH00750"/>
<dbReference type="eggNOG" id="COG0223">
    <property type="taxonomic scope" value="Bacteria"/>
</dbReference>
<dbReference type="OrthoDB" id="9802815at2"/>
<dbReference type="Proteomes" id="UP000000421">
    <property type="component" value="Chromosome"/>
</dbReference>
<dbReference type="GO" id="GO:0005829">
    <property type="term" value="C:cytosol"/>
    <property type="evidence" value="ECO:0007669"/>
    <property type="project" value="TreeGrafter"/>
</dbReference>
<dbReference type="GO" id="GO:0004479">
    <property type="term" value="F:methionyl-tRNA formyltransferase activity"/>
    <property type="evidence" value="ECO:0007669"/>
    <property type="project" value="UniProtKB-UniRule"/>
</dbReference>
<dbReference type="CDD" id="cd08646">
    <property type="entry name" value="FMT_core_Met-tRNA-FMT_N"/>
    <property type="match status" value="1"/>
</dbReference>
<dbReference type="CDD" id="cd08704">
    <property type="entry name" value="Met_tRNA_FMT_C"/>
    <property type="match status" value="1"/>
</dbReference>
<dbReference type="Gene3D" id="3.40.50.12230">
    <property type="match status" value="1"/>
</dbReference>
<dbReference type="HAMAP" id="MF_00182">
    <property type="entry name" value="Formyl_trans"/>
    <property type="match status" value="1"/>
</dbReference>
<dbReference type="InterPro" id="IPR005794">
    <property type="entry name" value="Fmt"/>
</dbReference>
<dbReference type="InterPro" id="IPR005793">
    <property type="entry name" value="Formyl_trans_C"/>
</dbReference>
<dbReference type="InterPro" id="IPR002376">
    <property type="entry name" value="Formyl_transf_N"/>
</dbReference>
<dbReference type="InterPro" id="IPR036477">
    <property type="entry name" value="Formyl_transf_N_sf"/>
</dbReference>
<dbReference type="InterPro" id="IPR011034">
    <property type="entry name" value="Formyl_transferase-like_C_sf"/>
</dbReference>
<dbReference type="InterPro" id="IPR001555">
    <property type="entry name" value="GART_AS"/>
</dbReference>
<dbReference type="InterPro" id="IPR044135">
    <property type="entry name" value="Met-tRNA-FMT_C"/>
</dbReference>
<dbReference type="InterPro" id="IPR041711">
    <property type="entry name" value="Met-tRNA-FMT_N"/>
</dbReference>
<dbReference type="NCBIfam" id="TIGR00460">
    <property type="entry name" value="fmt"/>
    <property type="match status" value="1"/>
</dbReference>
<dbReference type="PANTHER" id="PTHR11138">
    <property type="entry name" value="METHIONYL-TRNA FORMYLTRANSFERASE"/>
    <property type="match status" value="1"/>
</dbReference>
<dbReference type="PANTHER" id="PTHR11138:SF5">
    <property type="entry name" value="METHIONYL-TRNA FORMYLTRANSFERASE, MITOCHONDRIAL"/>
    <property type="match status" value="1"/>
</dbReference>
<dbReference type="Pfam" id="PF02911">
    <property type="entry name" value="Formyl_trans_C"/>
    <property type="match status" value="1"/>
</dbReference>
<dbReference type="Pfam" id="PF00551">
    <property type="entry name" value="Formyl_trans_N"/>
    <property type="match status" value="1"/>
</dbReference>
<dbReference type="SUPFAM" id="SSF50486">
    <property type="entry name" value="FMT C-terminal domain-like"/>
    <property type="match status" value="1"/>
</dbReference>
<dbReference type="SUPFAM" id="SSF53328">
    <property type="entry name" value="Formyltransferase"/>
    <property type="match status" value="1"/>
</dbReference>
<dbReference type="PROSITE" id="PS00373">
    <property type="entry name" value="GART"/>
    <property type="match status" value="1"/>
</dbReference>
<proteinExistence type="inferred from homology"/>
<organism>
    <name type="scientific">Bartonella henselae (strain ATCC 49882 / DSM 28221 / CCUG 30454 / Houston 1)</name>
    <name type="common">Rochalimaea henselae</name>
    <dbReference type="NCBI Taxonomy" id="283166"/>
    <lineage>
        <taxon>Bacteria</taxon>
        <taxon>Pseudomonadati</taxon>
        <taxon>Pseudomonadota</taxon>
        <taxon>Alphaproteobacteria</taxon>
        <taxon>Hyphomicrobiales</taxon>
        <taxon>Bartonellaceae</taxon>
        <taxon>Bartonella</taxon>
    </lineage>
</organism>
<name>FMT_BARHE</name>
<evidence type="ECO:0000255" key="1">
    <source>
        <dbReference type="HAMAP-Rule" id="MF_00182"/>
    </source>
</evidence>
<sequence>MVLRLSFMGTPDFSVPILQALLDAGHDIAAVYSQPPRPAGRRGLKLIPSPVQNLAKAKSIPVFTPQTLKTAEQQTKFTELAVDVAIVVAYGLLLPKTILETPRFGCFNAHASLLPRWRGAAPIQRAIMAGDKETGMTIMKMDEGLDTGPIALSCAIPITDNTTTNELAHKLSHIGADLMIEMLSALEKGQLKLTAQSGENITYASKIKKEETRIDWTKPAEFIHRYIRALSPFPGCWCNMNIAGREERVKILGSRLTTRPSLEIGRIEKGPDSLLIHCGQGCLEVTYLQRSGGKVLECATFLQGAHISAVF</sequence>